<dbReference type="EC" id="3.6.1.71" evidence="4"/>
<dbReference type="EC" id="3.6.1.72" evidence="2"/>
<dbReference type="EMBL" id="AY040779">
    <property type="protein sequence ID" value="AAK91770.1"/>
    <property type="molecule type" value="mRNA"/>
</dbReference>
<dbReference type="RefSeq" id="NP_998899.1">
    <property type="nucleotide sequence ID" value="NM_213734.1"/>
</dbReference>
<dbReference type="SMR" id="Q7YRZ1"/>
<dbReference type="FunCoup" id="Q7YRZ1">
    <property type="interactions" value="1789"/>
</dbReference>
<dbReference type="STRING" id="9823.ENSSSCP00000068010"/>
<dbReference type="PaxDb" id="9823-ENSSSCP00000011735"/>
<dbReference type="GeneID" id="387596"/>
<dbReference type="KEGG" id="ssc:387596"/>
<dbReference type="CTD" id="54840"/>
<dbReference type="eggNOG" id="KOG0562">
    <property type="taxonomic scope" value="Eukaryota"/>
</dbReference>
<dbReference type="eggNOG" id="KOG2134">
    <property type="taxonomic scope" value="Eukaryota"/>
</dbReference>
<dbReference type="InParanoid" id="Q7YRZ1"/>
<dbReference type="OrthoDB" id="3512845at2759"/>
<dbReference type="Proteomes" id="UP000008227">
    <property type="component" value="Unplaced"/>
</dbReference>
<dbReference type="Proteomes" id="UP000314985">
    <property type="component" value="Unplaced"/>
</dbReference>
<dbReference type="Proteomes" id="UP000694570">
    <property type="component" value="Unplaced"/>
</dbReference>
<dbReference type="Proteomes" id="UP000694571">
    <property type="component" value="Unplaced"/>
</dbReference>
<dbReference type="Proteomes" id="UP000694720">
    <property type="component" value="Unplaced"/>
</dbReference>
<dbReference type="Proteomes" id="UP000694722">
    <property type="component" value="Unplaced"/>
</dbReference>
<dbReference type="Proteomes" id="UP000694723">
    <property type="component" value="Unplaced"/>
</dbReference>
<dbReference type="Proteomes" id="UP000694724">
    <property type="component" value="Unplaced"/>
</dbReference>
<dbReference type="Proteomes" id="UP000694725">
    <property type="component" value="Unplaced"/>
</dbReference>
<dbReference type="Proteomes" id="UP000694726">
    <property type="component" value="Unplaced"/>
</dbReference>
<dbReference type="Proteomes" id="UP000694727">
    <property type="component" value="Unplaced"/>
</dbReference>
<dbReference type="Proteomes" id="UP000694728">
    <property type="component" value="Unplaced"/>
</dbReference>
<dbReference type="GO" id="GO:0005730">
    <property type="term" value="C:nucleolus"/>
    <property type="evidence" value="ECO:0007669"/>
    <property type="project" value="UniProtKB-SubCell"/>
</dbReference>
<dbReference type="GO" id="GO:0005654">
    <property type="term" value="C:nucleoplasm"/>
    <property type="evidence" value="ECO:0007669"/>
    <property type="project" value="UniProtKB-SubCell"/>
</dbReference>
<dbReference type="GO" id="GO:0005634">
    <property type="term" value="C:nucleus"/>
    <property type="evidence" value="ECO:0000318"/>
    <property type="project" value="GO_Central"/>
</dbReference>
<dbReference type="GO" id="GO:0033699">
    <property type="term" value="F:DNA 5'-adenosine monophosphate hydrolase activity"/>
    <property type="evidence" value="ECO:0000318"/>
    <property type="project" value="GO_Central"/>
</dbReference>
<dbReference type="GO" id="GO:0120108">
    <property type="term" value="F:DNA-3'-diphospho-5'-guanosine diphosphatase"/>
    <property type="evidence" value="ECO:0007669"/>
    <property type="project" value="UniProtKB-EC"/>
</dbReference>
<dbReference type="GO" id="GO:0003725">
    <property type="term" value="F:double-stranded RNA binding"/>
    <property type="evidence" value="ECO:0000318"/>
    <property type="project" value="GO_Central"/>
</dbReference>
<dbReference type="GO" id="GO:0030983">
    <property type="term" value="F:mismatched DNA binding"/>
    <property type="evidence" value="ECO:0000318"/>
    <property type="project" value="GO_Central"/>
</dbReference>
<dbReference type="GO" id="GO:1990165">
    <property type="term" value="F:single-strand break-containing DNA binding"/>
    <property type="evidence" value="ECO:0000318"/>
    <property type="project" value="GO_Central"/>
</dbReference>
<dbReference type="GO" id="GO:0003697">
    <property type="term" value="F:single-stranded DNA binding"/>
    <property type="evidence" value="ECO:0000318"/>
    <property type="project" value="GO_Central"/>
</dbReference>
<dbReference type="GO" id="GO:0008270">
    <property type="term" value="F:zinc ion binding"/>
    <property type="evidence" value="ECO:0007669"/>
    <property type="project" value="UniProtKB-KW"/>
</dbReference>
<dbReference type="GO" id="GO:0000012">
    <property type="term" value="P:single strand break repair"/>
    <property type="evidence" value="ECO:0000318"/>
    <property type="project" value="GO_Central"/>
</dbReference>
<dbReference type="CDD" id="cd01278">
    <property type="entry name" value="aprataxin_related"/>
    <property type="match status" value="1"/>
</dbReference>
<dbReference type="CDD" id="cd22735">
    <property type="entry name" value="FHA_APTX"/>
    <property type="match status" value="1"/>
</dbReference>
<dbReference type="FunFam" id="2.60.200.20:FF:000010">
    <property type="entry name" value="aprataxin isoform X1"/>
    <property type="match status" value="1"/>
</dbReference>
<dbReference type="FunFam" id="3.30.428.10:FF:000004">
    <property type="entry name" value="aprataxin isoform X2"/>
    <property type="match status" value="1"/>
</dbReference>
<dbReference type="Gene3D" id="2.60.200.20">
    <property type="match status" value="1"/>
</dbReference>
<dbReference type="Gene3D" id="3.30.428.10">
    <property type="entry name" value="HIT-like"/>
    <property type="match status" value="1"/>
</dbReference>
<dbReference type="InterPro" id="IPR041388">
    <property type="entry name" value="FHA_2"/>
</dbReference>
<dbReference type="InterPro" id="IPR047289">
    <property type="entry name" value="FHA_APTX"/>
</dbReference>
<dbReference type="InterPro" id="IPR019808">
    <property type="entry name" value="Histidine_triad_CS"/>
</dbReference>
<dbReference type="InterPro" id="IPR011146">
    <property type="entry name" value="HIT-like"/>
</dbReference>
<dbReference type="InterPro" id="IPR036265">
    <property type="entry name" value="HIT-like_sf"/>
</dbReference>
<dbReference type="InterPro" id="IPR008984">
    <property type="entry name" value="SMAD_FHA_dom_sf"/>
</dbReference>
<dbReference type="InterPro" id="IPR032566">
    <property type="entry name" value="Znf-C2HE"/>
</dbReference>
<dbReference type="InterPro" id="IPR013087">
    <property type="entry name" value="Znf_C2H2_type"/>
</dbReference>
<dbReference type="PANTHER" id="PTHR12486:SF4">
    <property type="entry name" value="APRATAXIN"/>
    <property type="match status" value="1"/>
</dbReference>
<dbReference type="PANTHER" id="PTHR12486">
    <property type="entry name" value="APRATAXIN-RELATED"/>
    <property type="match status" value="1"/>
</dbReference>
<dbReference type="Pfam" id="PF11969">
    <property type="entry name" value="DcpS_C"/>
    <property type="match status" value="1"/>
</dbReference>
<dbReference type="Pfam" id="PF17913">
    <property type="entry name" value="FHA_2"/>
    <property type="match status" value="1"/>
</dbReference>
<dbReference type="Pfam" id="PF16278">
    <property type="entry name" value="zf-C2HE"/>
    <property type="match status" value="1"/>
</dbReference>
<dbReference type="SUPFAM" id="SSF54197">
    <property type="entry name" value="HIT-like"/>
    <property type="match status" value="1"/>
</dbReference>
<dbReference type="SUPFAM" id="SSF49879">
    <property type="entry name" value="SMAD/FHA domain"/>
    <property type="match status" value="1"/>
</dbReference>
<dbReference type="PROSITE" id="PS00892">
    <property type="entry name" value="HIT_1"/>
    <property type="match status" value="1"/>
</dbReference>
<dbReference type="PROSITE" id="PS51084">
    <property type="entry name" value="HIT_2"/>
    <property type="match status" value="1"/>
</dbReference>
<dbReference type="PROSITE" id="PS00028">
    <property type="entry name" value="ZINC_FINGER_C2H2_1"/>
    <property type="match status" value="1"/>
</dbReference>
<keyword id="KW-0227">DNA damage</keyword>
<keyword id="KW-0234">DNA repair</keyword>
<keyword id="KW-0238">DNA-binding</keyword>
<keyword id="KW-0378">Hydrolase</keyword>
<keyword id="KW-0479">Metal-binding</keyword>
<keyword id="KW-0539">Nucleus</keyword>
<keyword id="KW-0597">Phosphoprotein</keyword>
<keyword id="KW-1185">Reference proteome</keyword>
<keyword id="KW-0862">Zinc</keyword>
<keyword id="KW-0863">Zinc-finger</keyword>
<accession>Q7YRZ1</accession>
<organism>
    <name type="scientific">Sus scrofa</name>
    <name type="common">Pig</name>
    <dbReference type="NCBI Taxonomy" id="9823"/>
    <lineage>
        <taxon>Eukaryota</taxon>
        <taxon>Metazoa</taxon>
        <taxon>Chordata</taxon>
        <taxon>Craniata</taxon>
        <taxon>Vertebrata</taxon>
        <taxon>Euteleostomi</taxon>
        <taxon>Mammalia</taxon>
        <taxon>Eutheria</taxon>
        <taxon>Laurasiatheria</taxon>
        <taxon>Artiodactyla</taxon>
        <taxon>Suina</taxon>
        <taxon>Suidae</taxon>
        <taxon>Sus</taxon>
    </lineage>
</organism>
<proteinExistence type="evidence at transcript level"/>
<name>APTX_PIG</name>
<protein>
    <recommendedName>
        <fullName>Aprataxin</fullName>
        <ecNumber evidence="4">3.6.1.71</ecNumber>
        <ecNumber evidence="2">3.6.1.72</ecNumber>
    </recommendedName>
    <alternativeName>
        <fullName>Forkhead-associated domain histidine triad-like protein</fullName>
        <shortName>FHA-HIT</shortName>
    </alternativeName>
</protein>
<comment type="function">
    <text evidence="2 4">DNA-binding protein involved in single-strand DNA break repair, double-strand DNA break repair and base excision repair. Resolves abortive DNA ligation intermediates formed either at base excision sites, or when DNA ligases attempt to repair non-ligatable breaks induced by reactive oxygen species. Catalyzes the release of adenylate groups covalently linked to 5'-phosphate termini, resulting in the production of 5'-phosphate termini that can be efficiently rejoined. Also able to hydrolyze adenosine 5'-monophosphoramidate (AMP-NH(2)) and diadenosine tetraphosphate (AppppA), but with lower catalytic activity (By similarity). Likewise, catalyzes the release of 3'-linked guanosine (DNAppG) and inosine (DNAppI) from DNA, but has higher specific activity with 5'-linked adenosine (AppDNA) (By similarity).</text>
</comment>
<comment type="catalytic activity">
    <reaction evidence="4">
        <text>a 5'-end adenosine-5'-diphospho-5'-2'-deoxyribonucleoside-DNA + H2O = a 5'-end 5'-phospho-2'-deoxyribonucleoside-DNA + AMP + 2 H(+)</text>
        <dbReference type="Rhea" id="RHEA:52128"/>
        <dbReference type="Rhea" id="RHEA-COMP:13180"/>
        <dbReference type="Rhea" id="RHEA-COMP:13181"/>
        <dbReference type="ChEBI" id="CHEBI:15377"/>
        <dbReference type="ChEBI" id="CHEBI:15378"/>
        <dbReference type="ChEBI" id="CHEBI:136412"/>
        <dbReference type="ChEBI" id="CHEBI:136413"/>
        <dbReference type="ChEBI" id="CHEBI:456215"/>
        <dbReference type="EC" id="3.6.1.71"/>
    </reaction>
</comment>
<comment type="catalytic activity">
    <reaction evidence="4">
        <text>a 5'-end adenosine-5'-diphospho-5'-ribonucleoside-2'-deoxyribonucleotide-DNA + H2O = a 5'-end 5'-phospho-ribonucleoside-2'-deoxyribonucleotide-DNA + AMP + 2 H(+)</text>
        <dbReference type="Rhea" id="RHEA:52132"/>
        <dbReference type="Rhea" id="RHEA-COMP:13182"/>
        <dbReference type="Rhea" id="RHEA-COMP:13183"/>
        <dbReference type="ChEBI" id="CHEBI:15377"/>
        <dbReference type="ChEBI" id="CHEBI:15378"/>
        <dbReference type="ChEBI" id="CHEBI:136414"/>
        <dbReference type="ChEBI" id="CHEBI:136415"/>
        <dbReference type="ChEBI" id="CHEBI:456215"/>
        <dbReference type="EC" id="3.6.1.71"/>
    </reaction>
</comment>
<comment type="catalytic activity">
    <reaction evidence="2">
        <text>a 3'-end 2'-deoxyribonucleotide-3'-diphospho-5'-guanosine-DNA + H2O = a 3'-end 2'-deoxyribonucleotide 3'-phosphate-DNA + GMP + 2 H(+)</text>
        <dbReference type="Rhea" id="RHEA:52140"/>
        <dbReference type="Rhea" id="RHEA-COMP:13186"/>
        <dbReference type="Rhea" id="RHEA-COMP:13187"/>
        <dbReference type="ChEBI" id="CHEBI:15377"/>
        <dbReference type="ChEBI" id="CHEBI:15378"/>
        <dbReference type="ChEBI" id="CHEBI:58115"/>
        <dbReference type="ChEBI" id="CHEBI:136419"/>
        <dbReference type="ChEBI" id="CHEBI:136420"/>
        <dbReference type="EC" id="3.6.1.72"/>
    </reaction>
</comment>
<comment type="subunit">
    <text evidence="4">Interacts with single-strand break repair proteins XRCC1, XRCC4, ADPRT/PARP1 and p53/TP53. Interacts with NCL. Interacts (via FHA-like domain) with MDC1 (phosphorylated).</text>
</comment>
<comment type="subcellular location">
    <subcellularLocation>
        <location evidence="4">Nucleus</location>
        <location evidence="4">Nucleoplasm</location>
    </subcellularLocation>
    <subcellularLocation>
        <location evidence="4">Nucleus</location>
        <location evidence="4">Nucleolus</location>
    </subcellularLocation>
    <text evidence="4">Upon genotoxic stress, colocalizes with XRCC1 at sites of DNA damage. Colocalizes with MDC1 at sites of DNA double-strand breaks. Interaction with NCL is required for nucleolar localization (By similarity).</text>
</comment>
<comment type="domain">
    <text evidence="4">The histidine triad, also called HIT motif, forms part of the binding loop for the alpha-phosphate of purine mononucleotide.</text>
</comment>
<comment type="domain">
    <text evidence="1">The FHA-like domain mediates interaction with NCL; XRCC1 and XRCC4.</text>
</comment>
<comment type="domain">
    <text evidence="1">The HIT domain is required for enzymatic activity.</text>
</comment>
<comment type="domain">
    <text evidence="1">The C2H2-type zinc finger mediates DNA-binding.</text>
</comment>
<reference key="1">
    <citation type="submission" date="2001-06" db="EMBL/GenBank/DDBJ databases">
        <title>Identification of FHA-HIT as a novel nuclear protein involved in cell-cycle regulation.</title>
        <authorList>
            <person name="Huang C.-H."/>
        </authorList>
    </citation>
    <scope>NUCLEOTIDE SEQUENCE [MRNA]</scope>
</reference>
<evidence type="ECO:0000250" key="1"/>
<evidence type="ECO:0000250" key="2">
    <source>
        <dbReference type="UniProtKB" id="O74859"/>
    </source>
</evidence>
<evidence type="ECO:0000250" key="3">
    <source>
        <dbReference type="UniProtKB" id="Q7TQC5"/>
    </source>
</evidence>
<evidence type="ECO:0000250" key="4">
    <source>
        <dbReference type="UniProtKB" id="Q7Z2E3"/>
    </source>
</evidence>
<evidence type="ECO:0000255" key="5">
    <source>
        <dbReference type="PROSITE-ProRule" id="PRU00464"/>
    </source>
</evidence>
<evidence type="ECO:0000256" key="6">
    <source>
        <dbReference type="SAM" id="MobiDB-lite"/>
    </source>
</evidence>
<gene>
    <name type="primary">APTX</name>
</gene>
<sequence length="356" mass="40580">MSNVSLSPSAVSRIMTRVCWLVRQDSRHQRIKLPHLEAVIVGRGPETKITDKKCSRQQVQLKAECNKGYVKVKQVGVNPTSIDSVIIGKDQEMKLQPGQVLHMVNELYPYVIEFEEEAKSPGLKTHRKRKRSGNSDSVERDASQEAKPSTGAEPGSNPSQCSVPPKKEKDAATKKESLSHWSQGLKISMEDPKMQVYKDDQVVVIKDKYPKARYHWLVLPWASISSLKAVTREHLELLRHMHTVGEKVIADFAGSSKLRFRLGYHAIPSMSHVHLHVISQDFDSPCLKNKKHWNSFNTEYFLESQAVIEMVQEAGRVTVRDGMPELLKLPLRCHECQQLLPSIPQLKEHLRKHWPK</sequence>
<feature type="chain" id="PRO_0000109841" description="Aprataxin">
    <location>
        <begin position="1"/>
        <end position="356"/>
    </location>
</feature>
<feature type="domain" description="FHA-like">
    <location>
        <begin position="38"/>
        <end position="87"/>
    </location>
</feature>
<feature type="domain" description="HIT" evidence="5">
    <location>
        <begin position="182"/>
        <end position="287"/>
    </location>
</feature>
<feature type="zinc finger region" description="C2H2-type">
    <location>
        <begin position="331"/>
        <end position="353"/>
    </location>
</feature>
<feature type="region of interest" description="Interactions with ADPRT/PARP1 and NCL" evidence="1">
    <location>
        <begin position="1"/>
        <end position="110"/>
    </location>
</feature>
<feature type="region of interest" description="Disordered" evidence="6">
    <location>
        <begin position="120"/>
        <end position="179"/>
    </location>
</feature>
<feature type="region of interest" description="Interaction with DNA substrate" evidence="4">
    <location>
        <begin position="207"/>
        <end position="211"/>
    </location>
</feature>
<feature type="region of interest" description="Interaction with DNA substrate" evidence="4">
    <location>
        <begin position="269"/>
        <end position="270"/>
    </location>
</feature>
<feature type="short sequence motif" description="Nuclear localization signal" evidence="1">
    <location>
        <begin position="126"/>
        <end position="131"/>
    </location>
</feature>
<feature type="short sequence motif" description="Histidine triad motif" evidence="5">
    <location>
        <begin position="272"/>
        <end position="276"/>
    </location>
</feature>
<feature type="compositionally biased region" description="Basic and acidic residues" evidence="6">
    <location>
        <begin position="165"/>
        <end position="178"/>
    </location>
</feature>
<feature type="active site" description="Tele-AMP-histidine intermediate" evidence="4">
    <location>
        <position position="274"/>
    </location>
</feature>
<feature type="site" description="Interaction with DNA substrate" evidence="4">
    <location>
        <position position="188"/>
    </location>
</feature>
<feature type="site" description="Interaction with DNA substrate" evidence="4">
    <location>
        <position position="265"/>
    </location>
</feature>
<feature type="site" description="Interaction with DNA substrate" evidence="4">
    <location>
        <position position="276"/>
    </location>
</feature>
<feature type="site" description="Interaction with DNA substrate" evidence="4">
    <location>
        <position position="291"/>
    </location>
</feature>
<feature type="modified residue" description="Phosphoserine" evidence="4">
    <location>
        <position position="132"/>
    </location>
</feature>
<feature type="modified residue" description="Phosphoserine" evidence="3">
    <location>
        <position position="137"/>
    </location>
</feature>